<feature type="chain" id="PRO_0000205878" description="Cell division topological specificity factor">
    <location>
        <begin position="1"/>
        <end position="77"/>
    </location>
</feature>
<protein>
    <recommendedName>
        <fullName>Cell division topological specificity factor</fullName>
    </recommendedName>
</protein>
<dbReference type="EMBL" id="AE001439">
    <property type="protein sequence ID" value="AAD05906.1"/>
    <property type="molecule type" value="Genomic_DNA"/>
</dbReference>
<dbReference type="PIR" id="C71945">
    <property type="entry name" value="C71945"/>
</dbReference>
<dbReference type="RefSeq" id="WP_000051412.1">
    <property type="nucleotide sequence ID" value="NZ_CP011330.1"/>
</dbReference>
<dbReference type="SMR" id="Q9ZMA7"/>
<dbReference type="KEGG" id="hpj:jhp_0315"/>
<dbReference type="PATRIC" id="fig|85963.30.peg.698"/>
<dbReference type="eggNOG" id="COG0851">
    <property type="taxonomic scope" value="Bacteria"/>
</dbReference>
<dbReference type="Proteomes" id="UP000000804">
    <property type="component" value="Chromosome"/>
</dbReference>
<dbReference type="GO" id="GO:0051301">
    <property type="term" value="P:cell division"/>
    <property type="evidence" value="ECO:0007669"/>
    <property type="project" value="UniProtKB-KW"/>
</dbReference>
<dbReference type="GO" id="GO:0032955">
    <property type="term" value="P:regulation of division septum assembly"/>
    <property type="evidence" value="ECO:0007669"/>
    <property type="project" value="InterPro"/>
</dbReference>
<dbReference type="Gene3D" id="3.30.1070.10">
    <property type="entry name" value="Cell division topological specificity factor MinE"/>
    <property type="match status" value="1"/>
</dbReference>
<dbReference type="HAMAP" id="MF_00262">
    <property type="entry name" value="MinE"/>
    <property type="match status" value="1"/>
</dbReference>
<dbReference type="InterPro" id="IPR005527">
    <property type="entry name" value="MinE"/>
</dbReference>
<dbReference type="InterPro" id="IPR036707">
    <property type="entry name" value="MinE_sf"/>
</dbReference>
<dbReference type="NCBIfam" id="TIGR01215">
    <property type="entry name" value="minE"/>
    <property type="match status" value="1"/>
</dbReference>
<dbReference type="NCBIfam" id="NF001422">
    <property type="entry name" value="PRK00296.1"/>
    <property type="match status" value="1"/>
</dbReference>
<dbReference type="Pfam" id="PF03776">
    <property type="entry name" value="MinE"/>
    <property type="match status" value="1"/>
</dbReference>
<dbReference type="SUPFAM" id="SSF55229">
    <property type="entry name" value="Cell division protein MinE topological specificity domain"/>
    <property type="match status" value="1"/>
</dbReference>
<name>MINE_HELPJ</name>
<accession>Q9ZMA7</accession>
<gene>
    <name type="primary">minE</name>
    <name type="ordered locus">jhp_0315</name>
</gene>
<sequence>MSLFDFFKNKGSAATATDRLKLILAKERTLNLPYMEEMRKEIIAVIQKYTKSSDIHFKTLDGNQSVETIEVEIILPK</sequence>
<evidence type="ECO:0000250" key="1"/>
<evidence type="ECO:0000305" key="2"/>
<organism>
    <name type="scientific">Helicobacter pylori (strain J99 / ATCC 700824)</name>
    <name type="common">Campylobacter pylori J99</name>
    <dbReference type="NCBI Taxonomy" id="85963"/>
    <lineage>
        <taxon>Bacteria</taxon>
        <taxon>Pseudomonadati</taxon>
        <taxon>Campylobacterota</taxon>
        <taxon>Epsilonproteobacteria</taxon>
        <taxon>Campylobacterales</taxon>
        <taxon>Helicobacteraceae</taxon>
        <taxon>Helicobacter</taxon>
    </lineage>
</organism>
<proteinExistence type="inferred from homology"/>
<keyword id="KW-0131">Cell cycle</keyword>
<keyword id="KW-0132">Cell division</keyword>
<reference key="1">
    <citation type="journal article" date="1999" name="Nature">
        <title>Genomic sequence comparison of two unrelated isolates of the human gastric pathogen Helicobacter pylori.</title>
        <authorList>
            <person name="Alm R.A."/>
            <person name="Ling L.-S.L."/>
            <person name="Moir D.T."/>
            <person name="King B.L."/>
            <person name="Brown E.D."/>
            <person name="Doig P.C."/>
            <person name="Smith D.R."/>
            <person name="Noonan B."/>
            <person name="Guild B.C."/>
            <person name="deJonge B.L."/>
            <person name="Carmel G."/>
            <person name="Tummino P.J."/>
            <person name="Caruso A."/>
            <person name="Uria-Nickelsen M."/>
            <person name="Mills D.M."/>
            <person name="Ives C."/>
            <person name="Gibson R."/>
            <person name="Merberg D."/>
            <person name="Mills S.D."/>
            <person name="Jiang Q."/>
            <person name="Taylor D.E."/>
            <person name="Vovis G.F."/>
            <person name="Trust T.J."/>
        </authorList>
    </citation>
    <scope>NUCLEOTIDE SEQUENCE [LARGE SCALE GENOMIC DNA]</scope>
    <source>
        <strain>J99 / ATCC 700824</strain>
    </source>
</reference>
<comment type="function">
    <text evidence="1">Prevents the cell division inhibition by proteins MinC and MinD at internal division sites while permitting inhibition at polar sites. This ensures cell division at the proper site by restricting the formation of a division septum at the midpoint of the long axis of the cell (By similarity).</text>
</comment>
<comment type="similarity">
    <text evidence="2">Belongs to the MinE family.</text>
</comment>